<gene>
    <name evidence="1" type="primary">tgt</name>
    <name type="ordered locus">THA_1733</name>
</gene>
<dbReference type="EC" id="2.4.2.29" evidence="1"/>
<dbReference type="EMBL" id="CP001185">
    <property type="protein sequence ID" value="ACJ76168.1"/>
    <property type="molecule type" value="Genomic_DNA"/>
</dbReference>
<dbReference type="RefSeq" id="WP_012580376.1">
    <property type="nucleotide sequence ID" value="NC_011653.1"/>
</dbReference>
<dbReference type="SMR" id="B7IDU1"/>
<dbReference type="STRING" id="484019.THA_1733"/>
<dbReference type="KEGG" id="taf:THA_1733"/>
<dbReference type="eggNOG" id="COG0343">
    <property type="taxonomic scope" value="Bacteria"/>
</dbReference>
<dbReference type="HOGENOM" id="CLU_022060_0_1_0"/>
<dbReference type="OrthoDB" id="9805417at2"/>
<dbReference type="UniPathway" id="UPA00392"/>
<dbReference type="Proteomes" id="UP000002453">
    <property type="component" value="Chromosome"/>
</dbReference>
<dbReference type="GO" id="GO:0005829">
    <property type="term" value="C:cytosol"/>
    <property type="evidence" value="ECO:0007669"/>
    <property type="project" value="TreeGrafter"/>
</dbReference>
<dbReference type="GO" id="GO:0046872">
    <property type="term" value="F:metal ion binding"/>
    <property type="evidence" value="ECO:0007669"/>
    <property type="project" value="UniProtKB-KW"/>
</dbReference>
<dbReference type="GO" id="GO:0008479">
    <property type="term" value="F:tRNA-guanosine(34) queuine transglycosylase activity"/>
    <property type="evidence" value="ECO:0007669"/>
    <property type="project" value="UniProtKB-UniRule"/>
</dbReference>
<dbReference type="GO" id="GO:0008616">
    <property type="term" value="P:queuosine biosynthetic process"/>
    <property type="evidence" value="ECO:0007669"/>
    <property type="project" value="UniProtKB-UniRule"/>
</dbReference>
<dbReference type="GO" id="GO:0002099">
    <property type="term" value="P:tRNA wobble guanine modification"/>
    <property type="evidence" value="ECO:0007669"/>
    <property type="project" value="TreeGrafter"/>
</dbReference>
<dbReference type="GO" id="GO:0101030">
    <property type="term" value="P:tRNA-guanine transglycosylation"/>
    <property type="evidence" value="ECO:0007669"/>
    <property type="project" value="InterPro"/>
</dbReference>
<dbReference type="FunFam" id="3.20.20.105:FF:000001">
    <property type="entry name" value="Queuine tRNA-ribosyltransferase"/>
    <property type="match status" value="1"/>
</dbReference>
<dbReference type="Gene3D" id="3.20.20.105">
    <property type="entry name" value="Queuine tRNA-ribosyltransferase-like"/>
    <property type="match status" value="1"/>
</dbReference>
<dbReference type="HAMAP" id="MF_00168">
    <property type="entry name" value="Q_tRNA_Tgt"/>
    <property type="match status" value="1"/>
</dbReference>
<dbReference type="InterPro" id="IPR050076">
    <property type="entry name" value="ArchSynthase1/Queuine_TRR"/>
</dbReference>
<dbReference type="InterPro" id="IPR004803">
    <property type="entry name" value="TGT"/>
</dbReference>
<dbReference type="InterPro" id="IPR036511">
    <property type="entry name" value="TGT-like_sf"/>
</dbReference>
<dbReference type="InterPro" id="IPR002616">
    <property type="entry name" value="tRNA_ribo_trans-like"/>
</dbReference>
<dbReference type="NCBIfam" id="TIGR00430">
    <property type="entry name" value="Q_tRNA_tgt"/>
    <property type="match status" value="1"/>
</dbReference>
<dbReference type="NCBIfam" id="TIGR00449">
    <property type="entry name" value="tgt_general"/>
    <property type="match status" value="1"/>
</dbReference>
<dbReference type="PANTHER" id="PTHR46499">
    <property type="entry name" value="QUEUINE TRNA-RIBOSYLTRANSFERASE"/>
    <property type="match status" value="1"/>
</dbReference>
<dbReference type="PANTHER" id="PTHR46499:SF1">
    <property type="entry name" value="QUEUINE TRNA-RIBOSYLTRANSFERASE"/>
    <property type="match status" value="1"/>
</dbReference>
<dbReference type="Pfam" id="PF01702">
    <property type="entry name" value="TGT"/>
    <property type="match status" value="1"/>
</dbReference>
<dbReference type="SUPFAM" id="SSF51713">
    <property type="entry name" value="tRNA-guanine transglycosylase"/>
    <property type="match status" value="1"/>
</dbReference>
<evidence type="ECO:0000255" key="1">
    <source>
        <dbReference type="HAMAP-Rule" id="MF_00168"/>
    </source>
</evidence>
<sequence length="367" mass="41218">MGLKFELLKTSGNARRGRIYLPHGVVETPTFMPVGTNANVKLMTPKLLDEIGAQIILGNAFHLYLKPGLDVFRFHGGIHNFMNWQKPVLTDSGGFQVFSLREGRKITEDGVLIRSPLDGSKHMITPELSMEIQHAIGSDIVMAFDYCAEPGISHQDAVVALELTSLWAERSLKKLRSLSDQAIFGIVQGAFFKDLRLRSAKEITSMNFDGFAIGGLSVGEEYDITLDMTKFTAPLLPENKPRYFMGAGSPKLIVDLVDSGIDMFDSVLPTRVARHGQALTWKGKLNIRSAKYKFSKEPIDESCGCYTCKNFSRSYIRHLFDRGEVLGQILLTIHNLHFMMDLSKKIRESIENDTFQELRGEVLKYYA</sequence>
<keyword id="KW-0328">Glycosyltransferase</keyword>
<keyword id="KW-0479">Metal-binding</keyword>
<keyword id="KW-0671">Queuosine biosynthesis</keyword>
<keyword id="KW-1185">Reference proteome</keyword>
<keyword id="KW-0808">Transferase</keyword>
<keyword id="KW-0819">tRNA processing</keyword>
<keyword id="KW-0862">Zinc</keyword>
<organism>
    <name type="scientific">Thermosipho africanus (strain TCF52B)</name>
    <dbReference type="NCBI Taxonomy" id="484019"/>
    <lineage>
        <taxon>Bacteria</taxon>
        <taxon>Thermotogati</taxon>
        <taxon>Thermotogota</taxon>
        <taxon>Thermotogae</taxon>
        <taxon>Thermotogales</taxon>
        <taxon>Fervidobacteriaceae</taxon>
        <taxon>Thermosipho</taxon>
    </lineage>
</organism>
<comment type="function">
    <text evidence="1">Catalyzes the base-exchange of a guanine (G) residue with the queuine precursor 7-aminomethyl-7-deazaguanine (PreQ1) at position 34 (anticodon wobble position) in tRNAs with GU(N) anticodons (tRNA-Asp, -Asn, -His and -Tyr). Catalysis occurs through a double-displacement mechanism. The nucleophile active site attacks the C1' of nucleotide 34 to detach the guanine base from the RNA, forming a covalent enzyme-RNA intermediate. The proton acceptor active site deprotonates the incoming PreQ1, allowing a nucleophilic attack on the C1' of the ribose to form the product. After dissociation, two additional enzymatic reactions on the tRNA convert PreQ1 to queuine (Q), resulting in the hypermodified nucleoside queuosine (7-(((4,5-cis-dihydroxy-2-cyclopenten-1-yl)amino)methyl)-7-deazaguanosine).</text>
</comment>
<comment type="catalytic activity">
    <reaction evidence="1">
        <text>7-aminomethyl-7-carbaguanine + guanosine(34) in tRNA = 7-aminomethyl-7-carbaguanosine(34) in tRNA + guanine</text>
        <dbReference type="Rhea" id="RHEA:24104"/>
        <dbReference type="Rhea" id="RHEA-COMP:10341"/>
        <dbReference type="Rhea" id="RHEA-COMP:10342"/>
        <dbReference type="ChEBI" id="CHEBI:16235"/>
        <dbReference type="ChEBI" id="CHEBI:58703"/>
        <dbReference type="ChEBI" id="CHEBI:74269"/>
        <dbReference type="ChEBI" id="CHEBI:82833"/>
        <dbReference type="EC" id="2.4.2.29"/>
    </reaction>
</comment>
<comment type="cofactor">
    <cofactor evidence="1">
        <name>Zn(2+)</name>
        <dbReference type="ChEBI" id="CHEBI:29105"/>
    </cofactor>
    <text evidence="1">Binds 1 zinc ion per subunit.</text>
</comment>
<comment type="pathway">
    <text evidence="1">tRNA modification; tRNA-queuosine biosynthesis.</text>
</comment>
<comment type="subunit">
    <text evidence="1">Homodimer. Within each dimer, one monomer is responsible for RNA recognition and catalysis, while the other monomer binds to the replacement base PreQ1.</text>
</comment>
<comment type="similarity">
    <text evidence="1">Belongs to the queuine tRNA-ribosyltransferase family.</text>
</comment>
<protein>
    <recommendedName>
        <fullName evidence="1">Queuine tRNA-ribosyltransferase</fullName>
        <ecNumber evidence="1">2.4.2.29</ecNumber>
    </recommendedName>
    <alternativeName>
        <fullName evidence="1">Guanine insertion enzyme</fullName>
    </alternativeName>
    <alternativeName>
        <fullName evidence="1">tRNA-guanine transglycosylase</fullName>
    </alternativeName>
</protein>
<accession>B7IDU1</accession>
<proteinExistence type="inferred from homology"/>
<feature type="chain" id="PRO_1000198033" description="Queuine tRNA-ribosyltransferase">
    <location>
        <begin position="1"/>
        <end position="367"/>
    </location>
</feature>
<feature type="region of interest" description="RNA binding; important for wobble base 34 recognition" evidence="1">
    <location>
        <begin position="270"/>
        <end position="274"/>
    </location>
</feature>
<feature type="active site" description="Proton acceptor" evidence="1">
    <location>
        <position position="91"/>
    </location>
</feature>
<feature type="active site" description="Nucleophile" evidence="1">
    <location>
        <position position="265"/>
    </location>
</feature>
<feature type="binding site" evidence="1">
    <location>
        <begin position="91"/>
        <end position="95"/>
    </location>
    <ligand>
        <name>substrate</name>
    </ligand>
</feature>
<feature type="binding site" evidence="1">
    <location>
        <position position="145"/>
    </location>
    <ligand>
        <name>substrate</name>
    </ligand>
</feature>
<feature type="binding site" evidence="1">
    <location>
        <position position="188"/>
    </location>
    <ligand>
        <name>substrate</name>
    </ligand>
</feature>
<feature type="binding site" evidence="1">
    <location>
        <position position="215"/>
    </location>
    <ligand>
        <name>substrate</name>
    </ligand>
</feature>
<feature type="binding site" evidence="1">
    <location>
        <position position="303"/>
    </location>
    <ligand>
        <name>Zn(2+)</name>
        <dbReference type="ChEBI" id="CHEBI:29105"/>
    </ligand>
</feature>
<feature type="binding site" evidence="1">
    <location>
        <position position="305"/>
    </location>
    <ligand>
        <name>Zn(2+)</name>
        <dbReference type="ChEBI" id="CHEBI:29105"/>
    </ligand>
</feature>
<feature type="binding site" evidence="1">
    <location>
        <position position="308"/>
    </location>
    <ligand>
        <name>Zn(2+)</name>
        <dbReference type="ChEBI" id="CHEBI:29105"/>
    </ligand>
</feature>
<feature type="binding site" evidence="1">
    <location>
        <position position="334"/>
    </location>
    <ligand>
        <name>Zn(2+)</name>
        <dbReference type="ChEBI" id="CHEBI:29105"/>
    </ligand>
</feature>
<reference key="1">
    <citation type="journal article" date="2009" name="J. Bacteriol.">
        <title>The genome of Thermosipho africanus TCF52B: lateral genetic connections to the Firmicutes and Archaea.</title>
        <authorList>
            <person name="Nesboe C.L."/>
            <person name="Bapteste E."/>
            <person name="Curtis B."/>
            <person name="Dahle H."/>
            <person name="Lopez P."/>
            <person name="Macleod D."/>
            <person name="Dlutek M."/>
            <person name="Bowman S."/>
            <person name="Zhaxybayeva O."/>
            <person name="Birkeland N.-K."/>
            <person name="Doolittle W.F."/>
        </authorList>
    </citation>
    <scope>NUCLEOTIDE SEQUENCE [LARGE SCALE GENOMIC DNA]</scope>
    <source>
        <strain>TCF52B</strain>
    </source>
</reference>
<name>TGT_THEAB</name>